<evidence type="ECO:0000255" key="1">
    <source>
        <dbReference type="HAMAP-Rule" id="MF_00087"/>
    </source>
</evidence>
<evidence type="ECO:0000256" key="2">
    <source>
        <dbReference type="SAM" id="MobiDB-lite"/>
    </source>
</evidence>
<accession>Q87A18</accession>
<reference key="1">
    <citation type="journal article" date="2003" name="J. Bacteriol.">
        <title>Comparative analyses of the complete genome sequences of Pierce's disease and citrus variegated chlorosis strains of Xylella fastidiosa.</title>
        <authorList>
            <person name="Van Sluys M.A."/>
            <person name="de Oliveira M.C."/>
            <person name="Monteiro-Vitorello C.B."/>
            <person name="Miyaki C.Y."/>
            <person name="Furlan L.R."/>
            <person name="Camargo L.E.A."/>
            <person name="da Silva A.C.R."/>
            <person name="Moon D.H."/>
            <person name="Takita M.A."/>
            <person name="Lemos E.G.M."/>
            <person name="Machado M.A."/>
            <person name="Ferro M.I.T."/>
            <person name="da Silva F.R."/>
            <person name="Goldman M.H.S."/>
            <person name="Goldman G.H."/>
            <person name="Lemos M.V.F."/>
            <person name="El-Dorry H."/>
            <person name="Tsai S.M."/>
            <person name="Carrer H."/>
            <person name="Carraro D.M."/>
            <person name="de Oliveira R.C."/>
            <person name="Nunes L.R."/>
            <person name="Siqueira W.J."/>
            <person name="Coutinho L.L."/>
            <person name="Kimura E.T."/>
            <person name="Ferro E.S."/>
            <person name="Harakava R."/>
            <person name="Kuramae E.E."/>
            <person name="Marino C.L."/>
            <person name="Giglioti E."/>
            <person name="Abreu I.L."/>
            <person name="Alves L.M.C."/>
            <person name="do Amaral A.M."/>
            <person name="Baia G.S."/>
            <person name="Blanco S.R."/>
            <person name="Brito M.S."/>
            <person name="Cannavan F.S."/>
            <person name="Celestino A.V."/>
            <person name="da Cunha A.F."/>
            <person name="Fenille R.C."/>
            <person name="Ferro J.A."/>
            <person name="Formighieri E.F."/>
            <person name="Kishi L.T."/>
            <person name="Leoni S.G."/>
            <person name="Oliveira A.R."/>
            <person name="Rosa V.E. Jr."/>
            <person name="Sassaki F.T."/>
            <person name="Sena J.A.D."/>
            <person name="de Souza A.A."/>
            <person name="Truffi D."/>
            <person name="Tsukumo F."/>
            <person name="Yanai G.M."/>
            <person name="Zaros L.G."/>
            <person name="Civerolo E.L."/>
            <person name="Simpson A.J.G."/>
            <person name="Almeida N.F. Jr."/>
            <person name="Setubal J.C."/>
            <person name="Kitajima J.P."/>
        </authorList>
    </citation>
    <scope>NUCLEOTIDE SEQUENCE [LARGE SCALE GENOMIC DNA]</scope>
    <source>
        <strain>Temecula1 / ATCC 700964</strain>
    </source>
</reference>
<name>HEM1_XYLFT</name>
<protein>
    <recommendedName>
        <fullName evidence="1">Glutamyl-tRNA reductase</fullName>
        <shortName evidence="1">GluTR</shortName>
        <ecNumber evidence="1">1.2.1.70</ecNumber>
    </recommendedName>
</protein>
<keyword id="KW-0521">NADP</keyword>
<keyword id="KW-0560">Oxidoreductase</keyword>
<keyword id="KW-0627">Porphyrin biosynthesis</keyword>
<keyword id="KW-1185">Reference proteome</keyword>
<feature type="chain" id="PRO_0000114093" description="Glutamyl-tRNA reductase">
    <location>
        <begin position="1"/>
        <end position="432"/>
    </location>
</feature>
<feature type="region of interest" description="Disordered" evidence="2">
    <location>
        <begin position="410"/>
        <end position="432"/>
    </location>
</feature>
<feature type="active site" description="Nucleophile" evidence="1">
    <location>
        <position position="50"/>
    </location>
</feature>
<feature type="binding site" evidence="1">
    <location>
        <begin position="49"/>
        <end position="52"/>
    </location>
    <ligand>
        <name>substrate</name>
    </ligand>
</feature>
<feature type="binding site" evidence="1">
    <location>
        <position position="101"/>
    </location>
    <ligand>
        <name>substrate</name>
    </ligand>
</feature>
<feature type="binding site" evidence="1">
    <location>
        <begin position="106"/>
        <end position="108"/>
    </location>
    <ligand>
        <name>substrate</name>
    </ligand>
</feature>
<feature type="binding site" evidence="1">
    <location>
        <position position="112"/>
    </location>
    <ligand>
        <name>substrate</name>
    </ligand>
</feature>
<feature type="binding site" evidence="1">
    <location>
        <begin position="181"/>
        <end position="186"/>
    </location>
    <ligand>
        <name>NADP(+)</name>
        <dbReference type="ChEBI" id="CHEBI:58349"/>
    </ligand>
</feature>
<feature type="site" description="Important for activity" evidence="1">
    <location>
        <position position="91"/>
    </location>
</feature>
<dbReference type="EC" id="1.2.1.70" evidence="1"/>
<dbReference type="EMBL" id="AE009442">
    <property type="protein sequence ID" value="AAO29845.1"/>
    <property type="molecule type" value="Genomic_DNA"/>
</dbReference>
<dbReference type="RefSeq" id="WP_004087400.1">
    <property type="nucleotide sequence ID" value="NC_004556.1"/>
</dbReference>
<dbReference type="SMR" id="Q87A18"/>
<dbReference type="GeneID" id="93905882"/>
<dbReference type="KEGG" id="xft:PD_2021"/>
<dbReference type="HOGENOM" id="CLU_035113_2_2_6"/>
<dbReference type="UniPathway" id="UPA00251">
    <property type="reaction ID" value="UER00316"/>
</dbReference>
<dbReference type="Proteomes" id="UP000002516">
    <property type="component" value="Chromosome"/>
</dbReference>
<dbReference type="GO" id="GO:0008883">
    <property type="term" value="F:glutamyl-tRNA reductase activity"/>
    <property type="evidence" value="ECO:0007669"/>
    <property type="project" value="UniProtKB-UniRule"/>
</dbReference>
<dbReference type="GO" id="GO:0050661">
    <property type="term" value="F:NADP binding"/>
    <property type="evidence" value="ECO:0007669"/>
    <property type="project" value="InterPro"/>
</dbReference>
<dbReference type="GO" id="GO:0019353">
    <property type="term" value="P:protoporphyrinogen IX biosynthetic process from glutamate"/>
    <property type="evidence" value="ECO:0007669"/>
    <property type="project" value="TreeGrafter"/>
</dbReference>
<dbReference type="CDD" id="cd05213">
    <property type="entry name" value="NAD_bind_Glutamyl_tRNA_reduct"/>
    <property type="match status" value="1"/>
</dbReference>
<dbReference type="FunFam" id="3.30.460.30:FF:000001">
    <property type="entry name" value="Glutamyl-tRNA reductase"/>
    <property type="match status" value="1"/>
</dbReference>
<dbReference type="FunFam" id="3.40.50.720:FF:000031">
    <property type="entry name" value="Glutamyl-tRNA reductase"/>
    <property type="match status" value="1"/>
</dbReference>
<dbReference type="Gene3D" id="3.30.460.30">
    <property type="entry name" value="Glutamyl-tRNA reductase, N-terminal domain"/>
    <property type="match status" value="1"/>
</dbReference>
<dbReference type="Gene3D" id="3.40.50.720">
    <property type="entry name" value="NAD(P)-binding Rossmann-like Domain"/>
    <property type="match status" value="1"/>
</dbReference>
<dbReference type="HAMAP" id="MF_00087">
    <property type="entry name" value="Glu_tRNA_reductase"/>
    <property type="match status" value="1"/>
</dbReference>
<dbReference type="InterPro" id="IPR000343">
    <property type="entry name" value="4pyrrol_synth_GluRdtase"/>
</dbReference>
<dbReference type="InterPro" id="IPR015896">
    <property type="entry name" value="4pyrrol_synth_GluRdtase_dimer"/>
</dbReference>
<dbReference type="InterPro" id="IPR015895">
    <property type="entry name" value="4pyrrol_synth_GluRdtase_N"/>
</dbReference>
<dbReference type="InterPro" id="IPR018214">
    <property type="entry name" value="GluRdtase_CS"/>
</dbReference>
<dbReference type="InterPro" id="IPR036453">
    <property type="entry name" value="GluRdtase_dimer_dom_sf"/>
</dbReference>
<dbReference type="InterPro" id="IPR036343">
    <property type="entry name" value="GluRdtase_N_sf"/>
</dbReference>
<dbReference type="InterPro" id="IPR036291">
    <property type="entry name" value="NAD(P)-bd_dom_sf"/>
</dbReference>
<dbReference type="InterPro" id="IPR006151">
    <property type="entry name" value="Shikm_DH/Glu-tRNA_Rdtase"/>
</dbReference>
<dbReference type="NCBIfam" id="TIGR01035">
    <property type="entry name" value="hemA"/>
    <property type="match status" value="1"/>
</dbReference>
<dbReference type="PANTHER" id="PTHR43013">
    <property type="entry name" value="GLUTAMYL-TRNA REDUCTASE"/>
    <property type="match status" value="1"/>
</dbReference>
<dbReference type="PANTHER" id="PTHR43013:SF1">
    <property type="entry name" value="GLUTAMYL-TRNA REDUCTASE"/>
    <property type="match status" value="1"/>
</dbReference>
<dbReference type="Pfam" id="PF00745">
    <property type="entry name" value="GlutR_dimer"/>
    <property type="match status" value="1"/>
</dbReference>
<dbReference type="Pfam" id="PF05201">
    <property type="entry name" value="GlutR_N"/>
    <property type="match status" value="1"/>
</dbReference>
<dbReference type="Pfam" id="PF01488">
    <property type="entry name" value="Shikimate_DH"/>
    <property type="match status" value="1"/>
</dbReference>
<dbReference type="PIRSF" id="PIRSF000445">
    <property type="entry name" value="4pyrrol_synth_GluRdtase"/>
    <property type="match status" value="1"/>
</dbReference>
<dbReference type="SUPFAM" id="SSF69742">
    <property type="entry name" value="Glutamyl tRNA-reductase catalytic, N-terminal domain"/>
    <property type="match status" value="1"/>
</dbReference>
<dbReference type="SUPFAM" id="SSF69075">
    <property type="entry name" value="Glutamyl tRNA-reductase dimerization domain"/>
    <property type="match status" value="1"/>
</dbReference>
<dbReference type="SUPFAM" id="SSF51735">
    <property type="entry name" value="NAD(P)-binding Rossmann-fold domains"/>
    <property type="match status" value="1"/>
</dbReference>
<dbReference type="PROSITE" id="PS00747">
    <property type="entry name" value="GLUTR"/>
    <property type="match status" value="1"/>
</dbReference>
<gene>
    <name evidence="1" type="primary">hemA</name>
    <name type="ordered locus">PD_2021</name>
</gene>
<organism>
    <name type="scientific">Xylella fastidiosa (strain Temecula1 / ATCC 700964)</name>
    <dbReference type="NCBI Taxonomy" id="183190"/>
    <lineage>
        <taxon>Bacteria</taxon>
        <taxon>Pseudomonadati</taxon>
        <taxon>Pseudomonadota</taxon>
        <taxon>Gammaproteobacteria</taxon>
        <taxon>Lysobacterales</taxon>
        <taxon>Lysobacteraceae</taxon>
        <taxon>Xylella</taxon>
    </lineage>
</organism>
<proteinExistence type="inferred from homology"/>
<comment type="function">
    <text evidence="1">Catalyzes the NADPH-dependent reduction of glutamyl-tRNA(Glu) to glutamate 1-semialdehyde (GSA).</text>
</comment>
<comment type="catalytic activity">
    <reaction evidence="1">
        <text>(S)-4-amino-5-oxopentanoate + tRNA(Glu) + NADP(+) = L-glutamyl-tRNA(Glu) + NADPH + H(+)</text>
        <dbReference type="Rhea" id="RHEA:12344"/>
        <dbReference type="Rhea" id="RHEA-COMP:9663"/>
        <dbReference type="Rhea" id="RHEA-COMP:9680"/>
        <dbReference type="ChEBI" id="CHEBI:15378"/>
        <dbReference type="ChEBI" id="CHEBI:57501"/>
        <dbReference type="ChEBI" id="CHEBI:57783"/>
        <dbReference type="ChEBI" id="CHEBI:58349"/>
        <dbReference type="ChEBI" id="CHEBI:78442"/>
        <dbReference type="ChEBI" id="CHEBI:78520"/>
        <dbReference type="EC" id="1.2.1.70"/>
    </reaction>
</comment>
<comment type="pathway">
    <text evidence="1">Porphyrin-containing compound metabolism; protoporphyrin-IX biosynthesis; 5-aminolevulinate from L-glutamyl-tRNA(Glu): step 1/2.</text>
</comment>
<comment type="subunit">
    <text evidence="1">Homodimer.</text>
</comment>
<comment type="domain">
    <text evidence="1">Possesses an unusual extended V-shaped dimeric structure with each monomer consisting of three distinct domains arranged along a curved 'spinal' alpha-helix. The N-terminal catalytic domain specifically recognizes the glutamate moiety of the substrate. The second domain is the NADPH-binding domain, and the third C-terminal domain is responsible for dimerization.</text>
</comment>
<comment type="miscellaneous">
    <text evidence="1">During catalysis, the active site Cys acts as a nucleophile attacking the alpha-carbonyl group of tRNA-bound glutamate with the formation of a thioester intermediate between enzyme and glutamate, and the concomitant release of tRNA(Glu). The thioester intermediate is finally reduced by direct hydride transfer from NADPH, to form the product GSA.</text>
</comment>
<comment type="similarity">
    <text evidence="1">Belongs to the glutamyl-tRNA reductase family.</text>
</comment>
<sequence length="432" mass="47966">MTLWVLGLNHQTAPMELRERASFVGDALPRALDSLRNLPNVNEAALLSTCNRTELYAETTNAQMLLNWLEQHRPGLQNHLYQYRDAAAVRHLFRVATGLDSMVLGESQILGQVKDSWSMARTHGTLGNTLDRLFQHSFSVAKHARTNTRIGTNPVSIASTAVRLAQDAFSPLNESTVLLIGAGETIQLAAKHLSEGRVQRLLIANRTHAKAQMLASQHGGYALPLTELNLHLAEADIIFSATAAPTPIVTQSNVESALHIRKRKPILLFDLAIPRDIETEVGTLTDAYLYTIDDLERAVEENRHSRREAAETAEAIIELQVKRYMDTLQAQAHQAPLRRLRTFGTTTRDELLTRARRQLANGRPAEEVLEQLAHGLTNRLLHPPTAALREAALANNTELVRAAEQLFPEKPGYHHPTLQTTIVKTDETDPAS</sequence>